<accession>Q02LJ2</accession>
<comment type="function">
    <text evidence="1">Could be involved in insertion of integral membrane proteins into the membrane.</text>
</comment>
<comment type="subcellular location">
    <subcellularLocation>
        <location evidence="1">Cell inner membrane</location>
        <topology evidence="1">Peripheral membrane protein</topology>
        <orientation evidence="1">Cytoplasmic side</orientation>
    </subcellularLocation>
</comment>
<comment type="similarity">
    <text evidence="1">Belongs to the UPF0161 family.</text>
</comment>
<gene>
    <name type="ordered locus">PA14_38060</name>
</gene>
<reference key="1">
    <citation type="journal article" date="2006" name="Genome Biol.">
        <title>Genomic analysis reveals that Pseudomonas aeruginosa virulence is combinatorial.</title>
        <authorList>
            <person name="Lee D.G."/>
            <person name="Urbach J.M."/>
            <person name="Wu G."/>
            <person name="Liberati N.T."/>
            <person name="Feinbaum R.L."/>
            <person name="Miyata S."/>
            <person name="Diggins L.T."/>
            <person name="He J."/>
            <person name="Saucier M."/>
            <person name="Deziel E."/>
            <person name="Friedman L."/>
            <person name="Li L."/>
            <person name="Grills G."/>
            <person name="Montgomery K."/>
            <person name="Kucherlapati R."/>
            <person name="Rahme L.G."/>
            <person name="Ausubel F.M."/>
        </authorList>
    </citation>
    <scope>NUCLEOTIDE SEQUENCE [LARGE SCALE GENOMIC DNA]</scope>
    <source>
        <strain>UCBPP-PA14</strain>
    </source>
</reference>
<dbReference type="EMBL" id="CP000438">
    <property type="protein sequence ID" value="ABJ11231.1"/>
    <property type="molecule type" value="Genomic_DNA"/>
</dbReference>
<dbReference type="KEGG" id="pau:PA14_38060"/>
<dbReference type="PseudoCAP" id="PA14_38060"/>
<dbReference type="HOGENOM" id="CLU_144811_6_1_6"/>
<dbReference type="BioCyc" id="PAER208963:G1G74-3201-MONOMER"/>
<dbReference type="Proteomes" id="UP000000653">
    <property type="component" value="Chromosome"/>
</dbReference>
<dbReference type="GO" id="GO:0005886">
    <property type="term" value="C:plasma membrane"/>
    <property type="evidence" value="ECO:0007669"/>
    <property type="project" value="UniProtKB-SubCell"/>
</dbReference>
<dbReference type="HAMAP" id="MF_00386">
    <property type="entry name" value="UPF0161_YidD"/>
    <property type="match status" value="1"/>
</dbReference>
<dbReference type="InterPro" id="IPR002696">
    <property type="entry name" value="Membr_insert_effic_factor_YidD"/>
</dbReference>
<dbReference type="NCBIfam" id="TIGR00278">
    <property type="entry name" value="membrane protein insertion efficiency factor YidD"/>
    <property type="match status" value="1"/>
</dbReference>
<dbReference type="PANTHER" id="PTHR33383">
    <property type="entry name" value="MEMBRANE PROTEIN INSERTION EFFICIENCY FACTOR-RELATED"/>
    <property type="match status" value="1"/>
</dbReference>
<dbReference type="PANTHER" id="PTHR33383:SF1">
    <property type="entry name" value="MEMBRANE PROTEIN INSERTION EFFICIENCY FACTOR-RELATED"/>
    <property type="match status" value="1"/>
</dbReference>
<dbReference type="Pfam" id="PF01809">
    <property type="entry name" value="YidD"/>
    <property type="match status" value="1"/>
</dbReference>
<dbReference type="SMART" id="SM01234">
    <property type="entry name" value="Haemolytic"/>
    <property type="match status" value="1"/>
</dbReference>
<feature type="chain" id="PRO_1000013112" description="Putative membrane protein insertion efficiency factor">
    <location>
        <begin position="1"/>
        <end position="86"/>
    </location>
</feature>
<protein>
    <recommendedName>
        <fullName evidence="1">Putative membrane protein insertion efficiency factor</fullName>
    </recommendedName>
</protein>
<name>YIDD_PSEAB</name>
<organism>
    <name type="scientific">Pseudomonas aeruginosa (strain UCBPP-PA14)</name>
    <dbReference type="NCBI Taxonomy" id="208963"/>
    <lineage>
        <taxon>Bacteria</taxon>
        <taxon>Pseudomonadati</taxon>
        <taxon>Pseudomonadota</taxon>
        <taxon>Gammaproteobacteria</taxon>
        <taxon>Pseudomonadales</taxon>
        <taxon>Pseudomonadaceae</taxon>
        <taxon>Pseudomonas</taxon>
    </lineage>
</organism>
<keyword id="KW-0997">Cell inner membrane</keyword>
<keyword id="KW-1003">Cell membrane</keyword>
<keyword id="KW-0472">Membrane</keyword>
<sequence>MKFLLIGLIRFYQYAISPLIGPRCRFYPSCSHYTLEAIRVHGALRGGYLGARRLLRCHPWHPGGYDPVPERQEQACACHRTAKPGE</sequence>
<evidence type="ECO:0000255" key="1">
    <source>
        <dbReference type="HAMAP-Rule" id="MF_00386"/>
    </source>
</evidence>
<proteinExistence type="inferred from homology"/>